<name>HSCA_VIBPA</name>
<evidence type="ECO:0000250" key="1"/>
<evidence type="ECO:0000255" key="2">
    <source>
        <dbReference type="HAMAP-Rule" id="MF_00679"/>
    </source>
</evidence>
<dbReference type="EMBL" id="BA000031">
    <property type="protein sequence ID" value="BAC58863.1"/>
    <property type="molecule type" value="Genomic_DNA"/>
</dbReference>
<dbReference type="RefSeq" id="NP_796979.1">
    <property type="nucleotide sequence ID" value="NC_004603.1"/>
</dbReference>
<dbReference type="RefSeq" id="WP_005460220.1">
    <property type="nucleotide sequence ID" value="NC_004603.1"/>
</dbReference>
<dbReference type="SMR" id="Q87S24"/>
<dbReference type="GeneID" id="1188075"/>
<dbReference type="KEGG" id="vpa:VP0600"/>
<dbReference type="PATRIC" id="fig|223926.6.peg.569"/>
<dbReference type="eggNOG" id="COG0443">
    <property type="taxonomic scope" value="Bacteria"/>
</dbReference>
<dbReference type="HOGENOM" id="CLU_005965_2_4_6"/>
<dbReference type="Proteomes" id="UP000002493">
    <property type="component" value="Chromosome 1"/>
</dbReference>
<dbReference type="GO" id="GO:0005524">
    <property type="term" value="F:ATP binding"/>
    <property type="evidence" value="ECO:0007669"/>
    <property type="project" value="UniProtKB-KW"/>
</dbReference>
<dbReference type="GO" id="GO:0016887">
    <property type="term" value="F:ATP hydrolysis activity"/>
    <property type="evidence" value="ECO:0007669"/>
    <property type="project" value="UniProtKB-UniRule"/>
</dbReference>
<dbReference type="GO" id="GO:0140662">
    <property type="term" value="F:ATP-dependent protein folding chaperone"/>
    <property type="evidence" value="ECO:0007669"/>
    <property type="project" value="InterPro"/>
</dbReference>
<dbReference type="GO" id="GO:0051082">
    <property type="term" value="F:unfolded protein binding"/>
    <property type="evidence" value="ECO:0007669"/>
    <property type="project" value="InterPro"/>
</dbReference>
<dbReference type="GO" id="GO:0016226">
    <property type="term" value="P:iron-sulfur cluster assembly"/>
    <property type="evidence" value="ECO:0007669"/>
    <property type="project" value="InterPro"/>
</dbReference>
<dbReference type="CDD" id="cd10236">
    <property type="entry name" value="ASKHA_NBD_HSP70_HscA"/>
    <property type="match status" value="1"/>
</dbReference>
<dbReference type="FunFam" id="3.30.420.40:FF:000046">
    <property type="entry name" value="Chaperone protein HscA"/>
    <property type="match status" value="1"/>
</dbReference>
<dbReference type="FunFam" id="2.60.34.10:FF:000005">
    <property type="entry name" value="Chaperone protein HscA homolog"/>
    <property type="match status" value="1"/>
</dbReference>
<dbReference type="FunFam" id="3.30.420.40:FF:000020">
    <property type="entry name" value="Chaperone protein HscA homolog"/>
    <property type="match status" value="1"/>
</dbReference>
<dbReference type="Gene3D" id="1.20.1270.10">
    <property type="match status" value="1"/>
</dbReference>
<dbReference type="Gene3D" id="3.30.420.40">
    <property type="match status" value="2"/>
</dbReference>
<dbReference type="Gene3D" id="3.90.640.10">
    <property type="entry name" value="Actin, Chain A, domain 4"/>
    <property type="match status" value="1"/>
</dbReference>
<dbReference type="Gene3D" id="2.60.34.10">
    <property type="entry name" value="Substrate Binding Domain Of DNAk, Chain A, domain 1"/>
    <property type="match status" value="1"/>
</dbReference>
<dbReference type="HAMAP" id="MF_00679">
    <property type="entry name" value="HscA"/>
    <property type="match status" value="1"/>
</dbReference>
<dbReference type="InterPro" id="IPR043129">
    <property type="entry name" value="ATPase_NBD"/>
</dbReference>
<dbReference type="InterPro" id="IPR018181">
    <property type="entry name" value="Heat_shock_70_CS"/>
</dbReference>
<dbReference type="InterPro" id="IPR042039">
    <property type="entry name" value="HscA_NBD"/>
</dbReference>
<dbReference type="InterPro" id="IPR029048">
    <property type="entry name" value="HSP70_C_sf"/>
</dbReference>
<dbReference type="InterPro" id="IPR029047">
    <property type="entry name" value="HSP70_peptide-bd_sf"/>
</dbReference>
<dbReference type="InterPro" id="IPR013126">
    <property type="entry name" value="Hsp_70_fam"/>
</dbReference>
<dbReference type="InterPro" id="IPR010236">
    <property type="entry name" value="ISC_FeS_clus_asmbl_HscA"/>
</dbReference>
<dbReference type="NCBIfam" id="TIGR01991">
    <property type="entry name" value="HscA"/>
    <property type="match status" value="1"/>
</dbReference>
<dbReference type="NCBIfam" id="NF003520">
    <property type="entry name" value="PRK05183.1"/>
    <property type="match status" value="1"/>
</dbReference>
<dbReference type="PANTHER" id="PTHR19375">
    <property type="entry name" value="HEAT SHOCK PROTEIN 70KDA"/>
    <property type="match status" value="1"/>
</dbReference>
<dbReference type="Pfam" id="PF00012">
    <property type="entry name" value="HSP70"/>
    <property type="match status" value="1"/>
</dbReference>
<dbReference type="PRINTS" id="PR00301">
    <property type="entry name" value="HEATSHOCK70"/>
</dbReference>
<dbReference type="SUPFAM" id="SSF53067">
    <property type="entry name" value="Actin-like ATPase domain"/>
    <property type="match status" value="2"/>
</dbReference>
<dbReference type="SUPFAM" id="SSF100934">
    <property type="entry name" value="Heat shock protein 70kD (HSP70), C-terminal subdomain"/>
    <property type="match status" value="1"/>
</dbReference>
<dbReference type="SUPFAM" id="SSF100920">
    <property type="entry name" value="Heat shock protein 70kD (HSP70), peptide-binding domain"/>
    <property type="match status" value="1"/>
</dbReference>
<dbReference type="PROSITE" id="PS00297">
    <property type="entry name" value="HSP70_1"/>
    <property type="match status" value="1"/>
</dbReference>
<dbReference type="PROSITE" id="PS00329">
    <property type="entry name" value="HSP70_2"/>
    <property type="match status" value="1"/>
</dbReference>
<reference key="1">
    <citation type="journal article" date="2003" name="Lancet">
        <title>Genome sequence of Vibrio parahaemolyticus: a pathogenic mechanism distinct from that of V. cholerae.</title>
        <authorList>
            <person name="Makino K."/>
            <person name="Oshima K."/>
            <person name="Kurokawa K."/>
            <person name="Yokoyama K."/>
            <person name="Uda T."/>
            <person name="Tagomori K."/>
            <person name="Iijima Y."/>
            <person name="Najima M."/>
            <person name="Nakano M."/>
            <person name="Yamashita A."/>
            <person name="Kubota Y."/>
            <person name="Kimura S."/>
            <person name="Yasunaga T."/>
            <person name="Honda T."/>
            <person name="Shinagawa H."/>
            <person name="Hattori M."/>
            <person name="Iida T."/>
        </authorList>
    </citation>
    <scope>NUCLEOTIDE SEQUENCE [LARGE SCALE GENOMIC DNA]</scope>
    <source>
        <strain>RIMD 2210633</strain>
    </source>
</reference>
<proteinExistence type="inferred from homology"/>
<feature type="chain" id="PRO_0000078653" description="Chaperone protein HscA homolog">
    <location>
        <begin position="1"/>
        <end position="617"/>
    </location>
</feature>
<comment type="function">
    <text evidence="1">Probable chaperone. Has a low intrinsic ATPase activity which is markedly stimulated by HscB (By similarity).</text>
</comment>
<comment type="similarity">
    <text evidence="2">Belongs to the heat shock protein 70 family.</text>
</comment>
<keyword id="KW-0067">ATP-binding</keyword>
<keyword id="KW-0143">Chaperone</keyword>
<keyword id="KW-0547">Nucleotide-binding</keyword>
<protein>
    <recommendedName>
        <fullName evidence="2">Chaperone protein HscA homolog</fullName>
    </recommendedName>
</protein>
<sequence length="617" mass="66095">MALLQIAEPGQSSAPHEHKLAAGIDLGTTNSLVASVRSGDATTLNDEQGRSILPSVVNYSAESTVVGYDAKAKAEFEPENTIISVKRLIGRSLKDIQSRYPSLPYRFKESDNGLPVLQTAQGDKNPIEVSADILKALGKRAEETLGGDLAGVVITVPAYFDDAQRAGTKDAAKLAGLHVLRLLNEPTAAAIAYGLDSGQEGVIAVYDLGGGTFDISILRLSKGVFEVLATGGDSALGGDDFDHLLADYLMEQAGLEAPLSAEKNRALLNIATATKIAFSEQDSVEVDVFGWKGTVTREQFEDLIRPLVKKTLMSCRRALKDADVEAEEVLEVVMVGGSTRTLLVREMVGEFFGRTPLTSINPDEVVAIGAGIQADILAGNKPDSEMLLLDVIPLSLGIETMGGLVEKIIPRNTTIPVARAQEFTTFKDGQTAMSVHVVQGEREMVDDCRSLARFSLKGIPPMAAGAAHIRVTYQVDADGLLSVTAMEKSTGVQSEIQVKPSYGLSDNEVANMLRDSMTHAKEDMQARALAEQRVEADRVIEGLIAAMQADGDELLSEQEKQDLLKAIEALIELRNGDDANAIEQGIKDTDKASQDFASRRMDKSIRAALSGQSVDDI</sequence>
<accession>Q87S24</accession>
<organism>
    <name type="scientific">Vibrio parahaemolyticus serotype O3:K6 (strain RIMD 2210633)</name>
    <dbReference type="NCBI Taxonomy" id="223926"/>
    <lineage>
        <taxon>Bacteria</taxon>
        <taxon>Pseudomonadati</taxon>
        <taxon>Pseudomonadota</taxon>
        <taxon>Gammaproteobacteria</taxon>
        <taxon>Vibrionales</taxon>
        <taxon>Vibrionaceae</taxon>
        <taxon>Vibrio</taxon>
    </lineage>
</organism>
<gene>
    <name evidence="2" type="primary">hscA</name>
    <name type="ordered locus">VP0600</name>
</gene>